<organism>
    <name type="scientific">Renibacterium salmoninarum (strain ATCC 33209 / DSM 20767 / JCM 11484 / NBRC 15589 / NCIMB 2235)</name>
    <dbReference type="NCBI Taxonomy" id="288705"/>
    <lineage>
        <taxon>Bacteria</taxon>
        <taxon>Bacillati</taxon>
        <taxon>Actinomycetota</taxon>
        <taxon>Actinomycetes</taxon>
        <taxon>Micrococcales</taxon>
        <taxon>Micrococcaceae</taxon>
        <taxon>Renibacterium</taxon>
    </lineage>
</organism>
<comment type="function">
    <text evidence="1">Binds directly to 23S rRNA. The L1 stalk is quite mobile in the ribosome, and is involved in E site tRNA release.</text>
</comment>
<comment type="function">
    <text evidence="1">Protein L1 is also a translational repressor protein, it controls the translation of the L11 operon by binding to its mRNA.</text>
</comment>
<comment type="subunit">
    <text evidence="1">Part of the 50S ribosomal subunit.</text>
</comment>
<comment type="similarity">
    <text evidence="1">Belongs to the universal ribosomal protein uL1 family.</text>
</comment>
<dbReference type="EMBL" id="CP000910">
    <property type="protein sequence ID" value="ABY22729.1"/>
    <property type="molecule type" value="Genomic_DNA"/>
</dbReference>
<dbReference type="RefSeq" id="WP_012244422.1">
    <property type="nucleotide sequence ID" value="NC_010168.1"/>
</dbReference>
<dbReference type="SMR" id="A9WNU3"/>
<dbReference type="STRING" id="288705.RSal33209_0989"/>
<dbReference type="KEGG" id="rsa:RSal33209_0989"/>
<dbReference type="eggNOG" id="COG0081">
    <property type="taxonomic scope" value="Bacteria"/>
</dbReference>
<dbReference type="HOGENOM" id="CLU_062853_0_0_11"/>
<dbReference type="Proteomes" id="UP000002007">
    <property type="component" value="Chromosome"/>
</dbReference>
<dbReference type="GO" id="GO:0015934">
    <property type="term" value="C:large ribosomal subunit"/>
    <property type="evidence" value="ECO:0007669"/>
    <property type="project" value="InterPro"/>
</dbReference>
<dbReference type="GO" id="GO:0019843">
    <property type="term" value="F:rRNA binding"/>
    <property type="evidence" value="ECO:0007669"/>
    <property type="project" value="UniProtKB-UniRule"/>
</dbReference>
<dbReference type="GO" id="GO:0003735">
    <property type="term" value="F:structural constituent of ribosome"/>
    <property type="evidence" value="ECO:0007669"/>
    <property type="project" value="InterPro"/>
</dbReference>
<dbReference type="GO" id="GO:0000049">
    <property type="term" value="F:tRNA binding"/>
    <property type="evidence" value="ECO:0007669"/>
    <property type="project" value="UniProtKB-KW"/>
</dbReference>
<dbReference type="GO" id="GO:0006417">
    <property type="term" value="P:regulation of translation"/>
    <property type="evidence" value="ECO:0007669"/>
    <property type="project" value="UniProtKB-KW"/>
</dbReference>
<dbReference type="GO" id="GO:0006412">
    <property type="term" value="P:translation"/>
    <property type="evidence" value="ECO:0007669"/>
    <property type="project" value="UniProtKB-UniRule"/>
</dbReference>
<dbReference type="CDD" id="cd00403">
    <property type="entry name" value="Ribosomal_L1"/>
    <property type="match status" value="1"/>
</dbReference>
<dbReference type="FunFam" id="3.40.50.790:FF:000001">
    <property type="entry name" value="50S ribosomal protein L1"/>
    <property type="match status" value="1"/>
</dbReference>
<dbReference type="Gene3D" id="3.30.190.20">
    <property type="match status" value="1"/>
</dbReference>
<dbReference type="Gene3D" id="3.40.50.790">
    <property type="match status" value="1"/>
</dbReference>
<dbReference type="HAMAP" id="MF_01318_B">
    <property type="entry name" value="Ribosomal_uL1_B"/>
    <property type="match status" value="1"/>
</dbReference>
<dbReference type="InterPro" id="IPR005878">
    <property type="entry name" value="Ribosom_uL1_bac-type"/>
</dbReference>
<dbReference type="InterPro" id="IPR002143">
    <property type="entry name" value="Ribosomal_uL1"/>
</dbReference>
<dbReference type="InterPro" id="IPR023674">
    <property type="entry name" value="Ribosomal_uL1-like"/>
</dbReference>
<dbReference type="InterPro" id="IPR028364">
    <property type="entry name" value="Ribosomal_uL1/biogenesis"/>
</dbReference>
<dbReference type="InterPro" id="IPR016095">
    <property type="entry name" value="Ribosomal_uL1_3-a/b-sand"/>
</dbReference>
<dbReference type="InterPro" id="IPR023673">
    <property type="entry name" value="Ribosomal_uL1_CS"/>
</dbReference>
<dbReference type="NCBIfam" id="TIGR01169">
    <property type="entry name" value="rplA_bact"/>
    <property type="match status" value="1"/>
</dbReference>
<dbReference type="PANTHER" id="PTHR36427">
    <property type="entry name" value="54S RIBOSOMAL PROTEIN L1, MITOCHONDRIAL"/>
    <property type="match status" value="1"/>
</dbReference>
<dbReference type="PANTHER" id="PTHR36427:SF3">
    <property type="entry name" value="LARGE RIBOSOMAL SUBUNIT PROTEIN UL1M"/>
    <property type="match status" value="1"/>
</dbReference>
<dbReference type="Pfam" id="PF00687">
    <property type="entry name" value="Ribosomal_L1"/>
    <property type="match status" value="1"/>
</dbReference>
<dbReference type="PIRSF" id="PIRSF002155">
    <property type="entry name" value="Ribosomal_L1"/>
    <property type="match status" value="1"/>
</dbReference>
<dbReference type="SUPFAM" id="SSF56808">
    <property type="entry name" value="Ribosomal protein L1"/>
    <property type="match status" value="1"/>
</dbReference>
<dbReference type="PROSITE" id="PS01199">
    <property type="entry name" value="RIBOSOMAL_L1"/>
    <property type="match status" value="1"/>
</dbReference>
<evidence type="ECO:0000255" key="1">
    <source>
        <dbReference type="HAMAP-Rule" id="MF_01318"/>
    </source>
</evidence>
<evidence type="ECO:0000305" key="2"/>
<proteinExistence type="inferred from homology"/>
<accession>A9WNU3</accession>
<reference key="1">
    <citation type="journal article" date="2008" name="J. Bacteriol.">
        <title>Genome sequence of the fish pathogen Renibacterium salmoninarum suggests reductive evolution away from an environmental Arthrobacter ancestor.</title>
        <authorList>
            <person name="Wiens G.D."/>
            <person name="Rockey D.D."/>
            <person name="Wu Z."/>
            <person name="Chang J."/>
            <person name="Levy R."/>
            <person name="Crane S."/>
            <person name="Chen D.S."/>
            <person name="Capri G.R."/>
            <person name="Burnett J.R."/>
            <person name="Sudheesh P.S."/>
            <person name="Schipma M.J."/>
            <person name="Burd H."/>
            <person name="Bhattacharyya A."/>
            <person name="Rhodes L.D."/>
            <person name="Kaul R."/>
            <person name="Strom M.S."/>
        </authorList>
    </citation>
    <scope>NUCLEOTIDE SEQUENCE [LARGE SCALE GENOMIC DNA]</scope>
    <source>
        <strain>ATCC 33209 / DSM 20767 / JCM 11484 / NBRC 15589 / NCIMB 2235</strain>
    </source>
</reference>
<sequence length="235" mass="24839">MAKRSKAYEAAVAKIEEGKFYAPADAVTLAQDTNPSKFDATIEVAFRLGVDPRKADQMVRGTVILPHGTGKTARVLVFATGDRAEAAIAAGADFVGSDDLIEKIAGGWTDFDAAVATPDLMGKVGRLGKVLGPRNLMPNPKTGTVTVDVAKAVNEIKGGKIDFRVDKHSNLHFIIGKVSFGAQQLVENYAAALDEVLRLKPSTSKGRYLQKATVTTTFGPGISVDPNVTKVLADA</sequence>
<feature type="chain" id="PRO_1000086299" description="Large ribosomal subunit protein uL1">
    <location>
        <begin position="1"/>
        <end position="235"/>
    </location>
</feature>
<gene>
    <name evidence="1" type="primary">rplA</name>
    <name type="ordered locus">RSal33209_0989</name>
</gene>
<keyword id="KW-1185">Reference proteome</keyword>
<keyword id="KW-0678">Repressor</keyword>
<keyword id="KW-0687">Ribonucleoprotein</keyword>
<keyword id="KW-0689">Ribosomal protein</keyword>
<keyword id="KW-0694">RNA-binding</keyword>
<keyword id="KW-0699">rRNA-binding</keyword>
<keyword id="KW-0810">Translation regulation</keyword>
<keyword id="KW-0820">tRNA-binding</keyword>
<name>RL1_RENSM</name>
<protein>
    <recommendedName>
        <fullName evidence="1">Large ribosomal subunit protein uL1</fullName>
    </recommendedName>
    <alternativeName>
        <fullName evidence="2">50S ribosomal protein L1</fullName>
    </alternativeName>
</protein>